<gene>
    <name evidence="6" type="primary">ENA1</name>
</gene>
<proteinExistence type="evidence at protein level"/>
<accession>C1L360</accession>
<evidence type="ECO:0000250" key="1">
    <source>
        <dbReference type="UniProtKB" id="P04191"/>
    </source>
</evidence>
<evidence type="ECO:0000250" key="2">
    <source>
        <dbReference type="UniProtKB" id="P13587"/>
    </source>
</evidence>
<evidence type="ECO:0000250" key="3">
    <source>
        <dbReference type="UniProtKB" id="Q7XB51"/>
    </source>
</evidence>
<evidence type="ECO:0000255" key="4"/>
<evidence type="ECO:0000269" key="5">
    <source>
    </source>
</evidence>
<evidence type="ECO:0000303" key="6">
    <source>
    </source>
</evidence>
<evidence type="ECO:0000305" key="7"/>
<evidence type="ECO:0000305" key="8">
    <source>
    </source>
</evidence>
<evidence type="ECO:0000312" key="9">
    <source>
        <dbReference type="EMBL" id="CAX27437.1"/>
    </source>
</evidence>
<feature type="chain" id="PRO_0000458054" description="Sodium/potassium exporting P-type ATPase 1">
    <location>
        <begin position="1"/>
        <end position="951"/>
    </location>
</feature>
<feature type="topological domain" description="Cytoplasmic" evidence="7">
    <location>
        <begin position="1"/>
        <end position="57"/>
    </location>
</feature>
<feature type="transmembrane region" description="Helical" evidence="4">
    <location>
        <begin position="58"/>
        <end position="78"/>
    </location>
</feature>
<feature type="topological domain" description="Extracellular" evidence="7">
    <location>
        <begin position="79"/>
        <end position="82"/>
    </location>
</feature>
<feature type="transmembrane region" description="Helical" evidence="4">
    <location>
        <begin position="83"/>
        <end position="103"/>
    </location>
</feature>
<feature type="topological domain" description="Cytoplasmic" evidence="7">
    <location>
        <begin position="104"/>
        <end position="247"/>
    </location>
</feature>
<feature type="transmembrane region" description="Helical" evidence="4">
    <location>
        <begin position="248"/>
        <end position="268"/>
    </location>
</feature>
<feature type="topological domain" description="Extracellular" evidence="7">
    <location>
        <begin position="269"/>
        <end position="273"/>
    </location>
</feature>
<feature type="transmembrane region" description="Helical" evidence="4">
    <location>
        <begin position="274"/>
        <end position="294"/>
    </location>
</feature>
<feature type="topological domain" description="Cytoplasmic" evidence="7">
    <location>
        <begin position="295"/>
        <end position="717"/>
    </location>
</feature>
<feature type="transmembrane region" description="Helical" evidence="4">
    <location>
        <begin position="718"/>
        <end position="738"/>
    </location>
</feature>
<feature type="topological domain" description="Extracellular" evidence="7">
    <location>
        <begin position="739"/>
        <end position="743"/>
    </location>
</feature>
<feature type="transmembrane region" description="Helical" evidence="4">
    <location>
        <begin position="744"/>
        <end position="764"/>
    </location>
</feature>
<feature type="topological domain" description="Cytoplasmic" evidence="7">
    <location>
        <begin position="765"/>
        <end position="799"/>
    </location>
</feature>
<feature type="transmembrane region" description="Helical" evidence="4">
    <location>
        <begin position="800"/>
        <end position="820"/>
    </location>
</feature>
<feature type="topological domain" description="Extracellular" evidence="7">
    <location>
        <begin position="821"/>
        <end position="840"/>
    </location>
</feature>
<feature type="transmembrane region" description="Helical" evidence="4">
    <location>
        <begin position="841"/>
        <end position="861"/>
    </location>
</feature>
<feature type="topological domain" description="Cytoplasmic" evidence="7">
    <location>
        <begin position="862"/>
        <end position="885"/>
    </location>
</feature>
<feature type="transmembrane region" description="Helical" evidence="4">
    <location>
        <begin position="886"/>
        <end position="906"/>
    </location>
</feature>
<feature type="topological domain" description="Extracellular" evidence="7">
    <location>
        <begin position="907"/>
        <end position="916"/>
    </location>
</feature>
<feature type="transmembrane region" description="Helical" evidence="4">
    <location>
        <begin position="917"/>
        <end position="937"/>
    </location>
</feature>
<feature type="topological domain" description="Cytoplasmic" evidence="7">
    <location>
        <begin position="938"/>
        <end position="951"/>
    </location>
</feature>
<feature type="active site" description="4-aspartylphosphate intermediate" evidence="1">
    <location>
        <position position="330"/>
    </location>
</feature>
<feature type="binding site" evidence="1">
    <location>
        <position position="330"/>
    </location>
    <ligand>
        <name>Mg(2+)</name>
        <dbReference type="ChEBI" id="CHEBI:18420"/>
    </ligand>
</feature>
<feature type="binding site" evidence="1">
    <location>
        <position position="332"/>
    </location>
    <ligand>
        <name>ATP</name>
        <dbReference type="ChEBI" id="CHEBI:30616"/>
    </ligand>
</feature>
<feature type="binding site" evidence="1">
    <location>
        <position position="332"/>
    </location>
    <ligand>
        <name>Mg(2+)</name>
        <dbReference type="ChEBI" id="CHEBI:18420"/>
    </ligand>
</feature>
<feature type="binding site" evidence="1">
    <location>
        <position position="414"/>
    </location>
    <ligand>
        <name>ATP</name>
        <dbReference type="ChEBI" id="CHEBI:30616"/>
    </ligand>
</feature>
<feature type="binding site" evidence="1">
    <location>
        <position position="467"/>
    </location>
    <ligand>
        <name>ATP</name>
        <dbReference type="ChEBI" id="CHEBI:30616"/>
    </ligand>
</feature>
<feature type="binding site" evidence="1">
    <location>
        <position position="511"/>
    </location>
    <ligand>
        <name>ATP</name>
        <dbReference type="ChEBI" id="CHEBI:30616"/>
    </ligand>
</feature>
<feature type="binding site" evidence="1">
    <location>
        <position position="575"/>
    </location>
    <ligand>
        <name>ATP</name>
        <dbReference type="ChEBI" id="CHEBI:30616"/>
    </ligand>
</feature>
<feature type="binding site" evidence="1">
    <location>
        <position position="576"/>
    </location>
    <ligand>
        <name>ATP</name>
        <dbReference type="ChEBI" id="CHEBI:30616"/>
    </ligand>
</feature>
<feature type="binding site" evidence="1">
    <location>
        <position position="577"/>
    </location>
    <ligand>
        <name>ATP</name>
        <dbReference type="ChEBI" id="CHEBI:30616"/>
    </ligand>
</feature>
<feature type="binding site" evidence="1">
    <location>
        <position position="636"/>
    </location>
    <ligand>
        <name>ATP</name>
        <dbReference type="ChEBI" id="CHEBI:30616"/>
    </ligand>
</feature>
<feature type="binding site" evidence="1">
    <location>
        <position position="642"/>
    </location>
    <ligand>
        <name>ATP</name>
        <dbReference type="ChEBI" id="CHEBI:30616"/>
    </ligand>
</feature>
<feature type="binding site" evidence="1">
    <location>
        <position position="661"/>
    </location>
    <ligand>
        <name>Mg(2+)</name>
        <dbReference type="ChEBI" id="CHEBI:18420"/>
    </ligand>
</feature>
<feature type="binding site" evidence="1">
    <location>
        <position position="664"/>
    </location>
    <ligand>
        <name>ATP</name>
        <dbReference type="ChEBI" id="CHEBI:30616"/>
    </ligand>
</feature>
<protein>
    <recommendedName>
        <fullName evidence="7">Sodium/potassium exporting P-type ATPase 1</fullName>
        <ecNumber evidence="8">7.2.2.3</ecNumber>
    </recommendedName>
    <alternativeName>
        <fullName evidence="6">MpENA1</fullName>
    </alternativeName>
</protein>
<name>ATN1_MARPO</name>
<comment type="function">
    <text evidence="2 5">Catalyzes the hydrolysis of ATP coupled with the export of sodium and potassium from the cell (PubMed:19757095). Appears to export potassium more efficiently than sodium (PubMed:19757095). May transport other cations such as lithium (By similarity). Sodium/potassium efflux ATPases are involved in salt tolerance and maintaining the membrane potential across the plasma membrane in high salinity (Na+) or alkaline (K+) environments (PubMed:19757095).</text>
</comment>
<comment type="catalytic activity">
    <reaction evidence="8">
        <text>Na(+)(in) + ATP + H2O = Na(+)(out) + ADP + phosphate + H(+)</text>
        <dbReference type="Rhea" id="RHEA:14633"/>
        <dbReference type="ChEBI" id="CHEBI:15377"/>
        <dbReference type="ChEBI" id="CHEBI:15378"/>
        <dbReference type="ChEBI" id="CHEBI:29101"/>
        <dbReference type="ChEBI" id="CHEBI:30616"/>
        <dbReference type="ChEBI" id="CHEBI:43474"/>
        <dbReference type="ChEBI" id="CHEBI:456216"/>
        <dbReference type="EC" id="7.2.2.3"/>
    </reaction>
    <physiologicalReaction direction="left-to-right" evidence="8">
        <dbReference type="Rhea" id="RHEA:14634"/>
    </physiologicalReaction>
</comment>
<comment type="catalytic activity">
    <reaction evidence="8">
        <text>K(+)(in) + ATP + H2O = K(+)(out) + ADP + phosphate + H(+)</text>
        <dbReference type="Rhea" id="RHEA:75815"/>
        <dbReference type="ChEBI" id="CHEBI:15377"/>
        <dbReference type="ChEBI" id="CHEBI:15378"/>
        <dbReference type="ChEBI" id="CHEBI:29103"/>
        <dbReference type="ChEBI" id="CHEBI:30616"/>
        <dbReference type="ChEBI" id="CHEBI:43474"/>
        <dbReference type="ChEBI" id="CHEBI:456216"/>
    </reaction>
</comment>
<comment type="cofactor">
    <cofactor evidence="1">
        <name>Mg(2+)</name>
        <dbReference type="ChEBI" id="CHEBI:18420"/>
    </cofactor>
</comment>
<comment type="subcellular location">
    <subcellularLocation>
        <location evidence="3">Cell membrane</location>
        <topology evidence="4">Multi-pass membrane protein</topology>
    </subcellularLocation>
</comment>
<comment type="PTM">
    <text evidence="2">The active site is phosphorylated in presence of sodium or potassium and in conditions of higher pH. Not phosphorylated in presence of calcium ions.</text>
</comment>
<comment type="similarity">
    <text evidence="7">Belongs to the cation transport ATPase (P-type) (TC 3.A.3) family. Type IID subfamily.</text>
</comment>
<sequence>MMGANSTEWHGQSVEQVTELLGTDVERGLKESVVGQLQKQFGPNELKGQRGVNPWKVLLAQFTNGLTVILLIATVVSFAVQDHAEGGVLAFVIIFNASVGFVQEYRAEKTMDALRRMASPTAKVIRDGGLDRISSPGVVPGDIIVFEVGDVVPADCRLIEVLNLEVDEAMLTGESLPVAKTVEAIKGENATVGDRLNMVYSSTILTKGRGKGIAVATGMSTEIGKITKSISETGQSSTPMQKRLNRMAYILFGISLVLAVIVFAVNKFEFNTDIIIYAVSLGIAVIPEGLIAVITIVMALGVRRMASQQALVRKLVALESLQAVTNICSDKTGTLTQGKMTVTTLWLPGMEDQYSISGNGWETSGEISVREQPIDAQECLSDLRFRLLVECSALCNTANIVEASEGKVWGDPTEIALQVLAYKLQMGKPSFRSRKEPITEYPFSSAEKRMSMLYRDVERDAFEIYTKGAENVLAICDRLLEKGEEVEISSRDEFMQSVSAQIQIMAKQGLRVLVVAYRTVSEKEMAKSVSKWERVDVERNMTFLGLVGIRDTPRPESRIAVDQCYEAGIIVHMLTGDHHDTALAIAREVGIIRPAPNSADESVVPMSNPVMTAAEFDALSEEQIDDLNELPLVIARCTPATKVRMIEALHRRKKFAAMTGDGVNDAPSLKKADVGIAMGAGSDVAKQSSEIVLTDNNFATIVMAVSEGRRIFSNIRKFILHLVSTNVGEVIVLIIGLAFKDRNGVSVFPLAPVQILFMNMVTSTPPAMALGVEAASKDTMKVPPHTKGLFGKEVLADMMVYGIIMGSLILVDWVLVIYAFGDSQLGLECNSDRMLNECNTVFRARSTIMVALIWMLLLHAYNCRHPRASLFTAEGGGASKLFSNRLLVWSVLLGSLMPIPTVYIPTLNTKIFKQETISWEWSIVVVSVVAFFFLSELYKLIKRNVMTSRVI</sequence>
<organism evidence="9">
    <name type="scientific">Marchantia polymorpha</name>
    <name type="common">Common liverwort</name>
    <name type="synonym">Marchantia aquatica</name>
    <dbReference type="NCBI Taxonomy" id="3197"/>
    <lineage>
        <taxon>Eukaryota</taxon>
        <taxon>Viridiplantae</taxon>
        <taxon>Streptophyta</taxon>
        <taxon>Embryophyta</taxon>
        <taxon>Marchantiophyta</taxon>
        <taxon>Marchantiopsida</taxon>
        <taxon>Marchantiidae</taxon>
        <taxon>Marchantiales</taxon>
        <taxon>Marchantiaceae</taxon>
        <taxon>Marchantia</taxon>
    </lineage>
</organism>
<reference evidence="9" key="1">
    <citation type="journal article" date="2009" name="Plant Mol. Biol.">
        <title>Role of ENA ATPase in Na(+) efflux at high pH in bryophytes.</title>
        <authorList>
            <person name="Fraile-Escanciano A."/>
            <person name="Garciadeblas B."/>
            <person name="Rodriguez-Navarro A."/>
            <person name="Benito B."/>
        </authorList>
    </citation>
    <scope>NUCLEOTIDE SEQUENCE [MRNA]</scope>
    <scope>FUNCTION</scope>
    <scope>CATALYTIC ACTIVITY</scope>
</reference>
<dbReference type="EC" id="7.2.2.3" evidence="8"/>
<dbReference type="EMBL" id="FM991876">
    <property type="protein sequence ID" value="CAX27437.1"/>
    <property type="molecule type" value="mRNA"/>
</dbReference>
<dbReference type="SMR" id="C1L360"/>
<dbReference type="GO" id="GO:0005886">
    <property type="term" value="C:plasma membrane"/>
    <property type="evidence" value="ECO:0007669"/>
    <property type="project" value="UniProtKB-SubCell"/>
</dbReference>
<dbReference type="GO" id="GO:0005524">
    <property type="term" value="F:ATP binding"/>
    <property type="evidence" value="ECO:0007669"/>
    <property type="project" value="UniProtKB-KW"/>
</dbReference>
<dbReference type="GO" id="GO:0016887">
    <property type="term" value="F:ATP hydrolysis activity"/>
    <property type="evidence" value="ECO:0007669"/>
    <property type="project" value="InterPro"/>
</dbReference>
<dbReference type="GO" id="GO:0046872">
    <property type="term" value="F:metal ion binding"/>
    <property type="evidence" value="ECO:0007669"/>
    <property type="project" value="UniProtKB-KW"/>
</dbReference>
<dbReference type="GO" id="GO:0005388">
    <property type="term" value="F:P-type calcium transporter activity"/>
    <property type="evidence" value="ECO:0007669"/>
    <property type="project" value="UniProtKB-EC"/>
</dbReference>
<dbReference type="GO" id="GO:0008900">
    <property type="term" value="F:P-type potassium:proton transporter activity"/>
    <property type="evidence" value="ECO:0000315"/>
    <property type="project" value="UniProtKB"/>
</dbReference>
<dbReference type="GO" id="GO:0097623">
    <property type="term" value="P:potassium ion export across plasma membrane"/>
    <property type="evidence" value="ECO:0000315"/>
    <property type="project" value="UniProtKB"/>
</dbReference>
<dbReference type="GO" id="GO:0006814">
    <property type="term" value="P:sodium ion transport"/>
    <property type="evidence" value="ECO:0007669"/>
    <property type="project" value="UniProtKB-KW"/>
</dbReference>
<dbReference type="FunFam" id="2.70.150.10:FF:000016">
    <property type="entry name" value="Calcium-transporting P-type ATPase putative"/>
    <property type="match status" value="1"/>
</dbReference>
<dbReference type="FunFam" id="3.40.50.1000:FF:000028">
    <property type="entry name" value="Calcium-transporting P-type ATPase, putative"/>
    <property type="match status" value="1"/>
</dbReference>
<dbReference type="FunFam" id="3.40.50.1000:FF:000001">
    <property type="entry name" value="Phospholipid-transporting ATPase IC"/>
    <property type="match status" value="1"/>
</dbReference>
<dbReference type="Gene3D" id="3.40.1110.10">
    <property type="entry name" value="Calcium-transporting ATPase, cytoplasmic domain N"/>
    <property type="match status" value="1"/>
</dbReference>
<dbReference type="Gene3D" id="2.70.150.10">
    <property type="entry name" value="Calcium-transporting ATPase, cytoplasmic transduction domain A"/>
    <property type="match status" value="1"/>
</dbReference>
<dbReference type="Gene3D" id="1.20.1110.10">
    <property type="entry name" value="Calcium-transporting ATPase, transmembrane domain"/>
    <property type="match status" value="1"/>
</dbReference>
<dbReference type="Gene3D" id="3.40.50.1000">
    <property type="entry name" value="HAD superfamily/HAD-like"/>
    <property type="match status" value="1"/>
</dbReference>
<dbReference type="InterPro" id="IPR006068">
    <property type="entry name" value="ATPase_P-typ_cation-transptr_C"/>
</dbReference>
<dbReference type="InterPro" id="IPR004014">
    <property type="entry name" value="ATPase_P-typ_cation-transptr_N"/>
</dbReference>
<dbReference type="InterPro" id="IPR023299">
    <property type="entry name" value="ATPase_P-typ_cyto_dom_N"/>
</dbReference>
<dbReference type="InterPro" id="IPR018303">
    <property type="entry name" value="ATPase_P-typ_P_site"/>
</dbReference>
<dbReference type="InterPro" id="IPR023298">
    <property type="entry name" value="ATPase_P-typ_TM_dom_sf"/>
</dbReference>
<dbReference type="InterPro" id="IPR008250">
    <property type="entry name" value="ATPase_P-typ_transduc_dom_A_sf"/>
</dbReference>
<dbReference type="InterPro" id="IPR036412">
    <property type="entry name" value="HAD-like_sf"/>
</dbReference>
<dbReference type="InterPro" id="IPR023214">
    <property type="entry name" value="HAD_sf"/>
</dbReference>
<dbReference type="InterPro" id="IPR006414">
    <property type="entry name" value="P-type_ATPase_IID"/>
</dbReference>
<dbReference type="InterPro" id="IPR001757">
    <property type="entry name" value="P_typ_ATPase"/>
</dbReference>
<dbReference type="InterPro" id="IPR044492">
    <property type="entry name" value="P_typ_ATPase_HD_dom"/>
</dbReference>
<dbReference type="NCBIfam" id="TIGR01523">
    <property type="entry name" value="ATPase-IID_K-Na"/>
    <property type="match status" value="1"/>
</dbReference>
<dbReference type="NCBIfam" id="TIGR01494">
    <property type="entry name" value="ATPase_P-type"/>
    <property type="match status" value="3"/>
</dbReference>
<dbReference type="PANTHER" id="PTHR42861">
    <property type="entry name" value="CALCIUM-TRANSPORTING ATPASE"/>
    <property type="match status" value="1"/>
</dbReference>
<dbReference type="Pfam" id="PF13246">
    <property type="entry name" value="Cation_ATPase"/>
    <property type="match status" value="1"/>
</dbReference>
<dbReference type="Pfam" id="PF00689">
    <property type="entry name" value="Cation_ATPase_C"/>
    <property type="match status" value="1"/>
</dbReference>
<dbReference type="Pfam" id="PF00690">
    <property type="entry name" value="Cation_ATPase_N"/>
    <property type="match status" value="1"/>
</dbReference>
<dbReference type="Pfam" id="PF00122">
    <property type="entry name" value="E1-E2_ATPase"/>
    <property type="match status" value="1"/>
</dbReference>
<dbReference type="Pfam" id="PF00702">
    <property type="entry name" value="Hydrolase"/>
    <property type="match status" value="1"/>
</dbReference>
<dbReference type="PRINTS" id="PR00119">
    <property type="entry name" value="CATATPASE"/>
</dbReference>
<dbReference type="PRINTS" id="PR00121">
    <property type="entry name" value="NAKATPASE"/>
</dbReference>
<dbReference type="SFLD" id="SFLDG00002">
    <property type="entry name" value="C1.7:_P-type_atpase_like"/>
    <property type="match status" value="1"/>
</dbReference>
<dbReference type="SFLD" id="SFLDF00027">
    <property type="entry name" value="p-type_atpase"/>
    <property type="match status" value="1"/>
</dbReference>
<dbReference type="SMART" id="SM00831">
    <property type="entry name" value="Cation_ATPase_N"/>
    <property type="match status" value="1"/>
</dbReference>
<dbReference type="SUPFAM" id="SSF81653">
    <property type="entry name" value="Calcium ATPase, transduction domain A"/>
    <property type="match status" value="1"/>
</dbReference>
<dbReference type="SUPFAM" id="SSF81665">
    <property type="entry name" value="Calcium ATPase, transmembrane domain M"/>
    <property type="match status" value="1"/>
</dbReference>
<dbReference type="SUPFAM" id="SSF56784">
    <property type="entry name" value="HAD-like"/>
    <property type="match status" value="1"/>
</dbReference>
<dbReference type="SUPFAM" id="SSF81660">
    <property type="entry name" value="Metal cation-transporting ATPase, ATP-binding domain N"/>
    <property type="match status" value="1"/>
</dbReference>
<dbReference type="PROSITE" id="PS00154">
    <property type="entry name" value="ATPASE_E1_E2"/>
    <property type="match status" value="1"/>
</dbReference>
<keyword id="KW-0067">ATP-binding</keyword>
<keyword id="KW-1003">Cell membrane</keyword>
<keyword id="KW-0406">Ion transport</keyword>
<keyword id="KW-0460">Magnesium</keyword>
<keyword id="KW-0472">Membrane</keyword>
<keyword id="KW-0479">Metal-binding</keyword>
<keyword id="KW-0547">Nucleotide-binding</keyword>
<keyword id="KW-0630">Potassium</keyword>
<keyword id="KW-0633">Potassium transport</keyword>
<keyword id="KW-0915">Sodium</keyword>
<keyword id="KW-0739">Sodium transport</keyword>
<keyword id="KW-1278">Translocase</keyword>
<keyword id="KW-0812">Transmembrane</keyword>
<keyword id="KW-1133">Transmembrane helix</keyword>
<keyword id="KW-0813">Transport</keyword>